<comment type="function">
    <molecule>Isoform 1</molecule>
    <text evidence="7">Kinase that contributes to activation of the hypersensitive response, a form of programmed cell death, upon fungal infection.</text>
</comment>
<comment type="function">
    <molecule>Isoform 2</molecule>
    <text evidence="7 10">Secreted protein that contributes to activation of the hypersensitive response, a form of programmed cell death, upon fungal infection (PubMed:36577386). May sense the presence of fungal material and relay the signal to WAK17 isoform 1 (Probable).</text>
</comment>
<comment type="catalytic activity">
    <molecule>Isoform 1</molecule>
    <reaction evidence="1">
        <text>L-seryl-[protein] + ATP = O-phospho-L-seryl-[protein] + ADP + H(+)</text>
        <dbReference type="Rhea" id="RHEA:17989"/>
        <dbReference type="Rhea" id="RHEA-COMP:9863"/>
        <dbReference type="Rhea" id="RHEA-COMP:11604"/>
        <dbReference type="ChEBI" id="CHEBI:15378"/>
        <dbReference type="ChEBI" id="CHEBI:29999"/>
        <dbReference type="ChEBI" id="CHEBI:30616"/>
        <dbReference type="ChEBI" id="CHEBI:83421"/>
        <dbReference type="ChEBI" id="CHEBI:456216"/>
        <dbReference type="EC" id="2.7.11.1"/>
    </reaction>
</comment>
<comment type="catalytic activity">
    <molecule>Isoform 1</molecule>
    <reaction evidence="1">
        <text>L-threonyl-[protein] + ATP = O-phospho-L-threonyl-[protein] + ADP + H(+)</text>
        <dbReference type="Rhea" id="RHEA:46608"/>
        <dbReference type="Rhea" id="RHEA-COMP:11060"/>
        <dbReference type="Rhea" id="RHEA-COMP:11605"/>
        <dbReference type="ChEBI" id="CHEBI:15378"/>
        <dbReference type="ChEBI" id="CHEBI:30013"/>
        <dbReference type="ChEBI" id="CHEBI:30616"/>
        <dbReference type="ChEBI" id="CHEBI:61977"/>
        <dbReference type="ChEBI" id="CHEBI:456216"/>
        <dbReference type="EC" id="2.7.11.1"/>
    </reaction>
</comment>
<comment type="cofactor">
    <molecule>Isoform 1</molecule>
    <cofactor evidence="1">
        <name>Mn(2+)</name>
        <dbReference type="ChEBI" id="CHEBI:29035"/>
    </cofactor>
    <cofactor evidence="1">
        <name>Mg(2+)</name>
        <dbReference type="ChEBI" id="CHEBI:18420"/>
    </cofactor>
</comment>
<comment type="subunit">
    <molecule>Isoform 1</molecule>
    <text evidence="7">Interacts with WAK17 isoform 2; the interaction is direct (PubMed:36577386). Interacts with LRR5; the interaction is direct (PubMed:36577386).</text>
</comment>
<comment type="subunit">
    <molecule>Isoform 2</molecule>
    <text evidence="7">Interacts with WAK17 isoform 1; the interaction is direct.</text>
</comment>
<comment type="subunit">
    <molecule>Isoform 2</molecule>
    <text evidence="7">(Microbial infection) Interacts with G.zeae CFEM1 (via CFEM domain); the interaction is direct (PubMed:36577386). Interacts with G.zeae CFEMN1; the interaction is direct (PubMed:36577386). Interacts with G.zeae CFEM5; the interaction is direct (PubMed:36577386).</text>
</comment>
<comment type="subcellular location">
    <molecule>Isoform 1</molecule>
    <subcellularLocation>
        <location evidence="7">Cell membrane</location>
        <topology evidence="2">Single-pass type I membrane protein</topology>
    </subcellularLocation>
</comment>
<comment type="subcellular location">
    <molecule>Isoform 2</molecule>
    <subcellularLocation>
        <location evidence="7">Cell membrane</location>
        <topology evidence="10">Peripheral membrane protein</topology>
    </subcellularLocation>
    <text evidence="7">Associates with the plasma membrane via interactions with WAK17 isoform 1.</text>
</comment>
<comment type="alternative products">
    <event type="alternative splicing"/>
    <isoform>
        <id>A0A1D6E0S8-1</id>
        <name evidence="7">1</name>
        <name evidence="8">WAK17</name>
        <sequence type="displayed"/>
    </isoform>
    <isoform>
        <id>A0A1D6E0S8-2</id>
        <name evidence="7">2</name>
        <name evidence="8">WAK17ET</name>
        <sequence type="described" ref="VSP_061849"/>
    </isoform>
</comment>
<comment type="induction">
    <molecule>Isoform 1</molecule>
    <text evidence="7">Suppressed in stalks during infection by G.zeae.</text>
</comment>
<comment type="induction">
    <molecule>Isoform 2</molecule>
    <text evidence="7">Suppressed in stalks during infection by G.zeae.</text>
</comment>
<comment type="similarity">
    <text evidence="4">Belongs to the protein kinase superfamily. Ser/Thr protein kinase family.</text>
</comment>
<keyword id="KW-0025">Alternative splicing</keyword>
<keyword id="KW-0067">ATP-binding</keyword>
<keyword id="KW-0106">Calcium</keyword>
<keyword id="KW-1003">Cell membrane</keyword>
<keyword id="KW-1015">Disulfide bond</keyword>
<keyword id="KW-0245">EGF-like domain</keyword>
<keyword id="KW-0325">Glycoprotein</keyword>
<keyword id="KW-0418">Kinase</keyword>
<keyword id="KW-0472">Membrane</keyword>
<keyword id="KW-0547">Nucleotide-binding</keyword>
<keyword id="KW-0675">Receptor</keyword>
<keyword id="KW-1185">Reference proteome</keyword>
<keyword id="KW-0677">Repeat</keyword>
<keyword id="KW-0723">Serine/threonine-protein kinase</keyword>
<keyword id="KW-0732">Signal</keyword>
<keyword id="KW-0808">Transferase</keyword>
<keyword id="KW-0812">Transmembrane</keyword>
<keyword id="KW-1133">Transmembrane helix</keyword>
<proteinExistence type="evidence at protein level"/>
<protein>
    <recommendedName>
        <fullName evidence="8">Wall-associated receptor kinase 17</fullName>
        <shortName evidence="8">ZmWAK17</shortName>
        <ecNumber evidence="4">2.7.11.1</ecNumber>
    </recommendedName>
    <alternativeName>
        <fullName>Receptor-like protein kinase 12</fullName>
    </alternativeName>
</protein>
<organism evidence="12">
    <name type="scientific">Zea mays</name>
    <name type="common">Maize</name>
    <dbReference type="NCBI Taxonomy" id="4577"/>
    <lineage>
        <taxon>Eukaryota</taxon>
        <taxon>Viridiplantae</taxon>
        <taxon>Streptophyta</taxon>
        <taxon>Embryophyta</taxon>
        <taxon>Tracheophyta</taxon>
        <taxon>Spermatophyta</taxon>
        <taxon>Magnoliopsida</taxon>
        <taxon>Liliopsida</taxon>
        <taxon>Poales</taxon>
        <taxon>Poaceae</taxon>
        <taxon>PACMAD clade</taxon>
        <taxon>Panicoideae</taxon>
        <taxon>Andropogonodae</taxon>
        <taxon>Andropogoneae</taxon>
        <taxon>Tripsacinae</taxon>
        <taxon>Zea</taxon>
    </lineage>
</organism>
<gene>
    <name evidence="8" type="primary">WAK17</name>
    <name type="synonym">RLK12</name>
    <name evidence="11" type="ORF">ZEAMMB73_Zm00001d002447</name>
</gene>
<name>WAK17_MAIZE</name>
<feature type="signal peptide" evidence="2">
    <location>
        <begin position="1"/>
        <end position="42"/>
    </location>
</feature>
<feature type="chain" id="PRO_0000457870" description="Wall-associated receptor kinase 17" evidence="2">
    <location>
        <begin position="43"/>
        <end position="856"/>
    </location>
</feature>
<feature type="transmembrane region" description="Helical" evidence="2">
    <location>
        <begin position="452"/>
        <end position="470"/>
    </location>
</feature>
<feature type="domain" description="EGF-like 1" evidence="3">
    <location>
        <begin position="297"/>
        <end position="334"/>
    </location>
</feature>
<feature type="domain" description="EGF-like 2; calcium-binding" evidence="3">
    <location>
        <begin position="335"/>
        <end position="380"/>
    </location>
</feature>
<feature type="domain" description="Protein kinase" evidence="4">
    <location>
        <begin position="527"/>
        <end position="805"/>
    </location>
</feature>
<feature type="region of interest" description="Disordered" evidence="6">
    <location>
        <begin position="816"/>
        <end position="844"/>
    </location>
</feature>
<feature type="compositionally biased region" description="Basic and acidic residues" evidence="6">
    <location>
        <begin position="823"/>
        <end position="832"/>
    </location>
</feature>
<feature type="compositionally biased region" description="Polar residues" evidence="6">
    <location>
        <begin position="833"/>
        <end position="844"/>
    </location>
</feature>
<feature type="active site" description="Proton acceptor" evidence="4">
    <location>
        <position position="652"/>
    </location>
</feature>
<feature type="binding site" evidence="4">
    <location>
        <begin position="533"/>
        <end position="541"/>
    </location>
    <ligand>
        <name>ATP</name>
        <dbReference type="ChEBI" id="CHEBI:30616"/>
    </ligand>
</feature>
<feature type="binding site" evidence="4">
    <location>
        <position position="555"/>
    </location>
    <ligand>
        <name>ATP</name>
        <dbReference type="ChEBI" id="CHEBI:30616"/>
    </ligand>
</feature>
<feature type="glycosylation site" description="N-linked (GlcNAc...) asparagine" evidence="5">
    <location>
        <position position="171"/>
    </location>
</feature>
<feature type="glycosylation site" description="N-linked (GlcNAc...) asparagine" evidence="5">
    <location>
        <position position="234"/>
    </location>
</feature>
<feature type="glycosylation site" description="N-linked (GlcNAc...) asparagine" evidence="5">
    <location>
        <position position="346"/>
    </location>
</feature>
<feature type="glycosylation site" description="N-linked (GlcNAc...) asparagine" evidence="5">
    <location>
        <position position="354"/>
    </location>
</feature>
<feature type="glycosylation site" description="N-linked (GlcNAc...) asparagine" evidence="5">
    <location>
        <position position="380"/>
    </location>
</feature>
<feature type="disulfide bond" evidence="3">
    <location>
        <begin position="301"/>
        <end position="306"/>
    </location>
</feature>
<feature type="disulfide bond" evidence="3">
    <location>
        <begin position="319"/>
        <end position="333"/>
    </location>
</feature>
<feature type="disulfide bond" evidence="3">
    <location>
        <begin position="339"/>
        <end position="353"/>
    </location>
</feature>
<feature type="disulfide bond" evidence="3">
    <location>
        <begin position="347"/>
        <end position="362"/>
    </location>
</feature>
<feature type="disulfide bond" evidence="3">
    <location>
        <begin position="364"/>
        <end position="379"/>
    </location>
</feature>
<feature type="splice variant" id="VSP_061849" description="In isoform 2." evidence="10">
    <original>VSPSQQPQGINVCDHPEKNPCTYIKYCIDLEGVVSCACPEGMSGDGRKNGRGCCFSCQKHFPLDTVLGVSLVLMVTTTTAASCYCWAVKKRELGRKRAELFRKNGGLLLQQRFSTITSQGEDQYSSKIFSAEELKAATDNYSESRILGRGGQGTVYKGILPDQTVVAIKKSKVFDESQVEQFVNEIAILSQIDHPNVVKLLGCCLETQVPLLVYEFISNGTLFQHIHNRNATRPLTWEDCLRIAAETADALAYLHSASSIPIIHRDIKSSNILLDGNFVAKIADFGASRSVPFDQTHITTLIQGTIGYLDPEYFQSSQLTEKSDVYSFGVVLAELLTRQKPISAARPEDSCNLAMHLVVLFNKGRLLQEIEPHILAEAGEDQCYAVAELSVRCLNVKGEERPAMVVVASVLQELRRSFTIDQAVGIKDESIQENSEQEEKHLHESRSIPSLQSSEVSTQCSMEAKMSSFC</original>
    <variation>GNNVLRFKLQLSIYSKL</variation>
    <location>
        <begin position="387"/>
        <end position="856"/>
    </location>
</feature>
<feature type="mutagenesis site" description="Loss of cell signaling activity." evidence="7">
    <original>C</original>
    <variation>A</variation>
    <location>
        <position position="317"/>
    </location>
</feature>
<feature type="mutagenesis site" description="Loss of cell signaling activity." evidence="7">
    <original>C</original>
    <variation>A</variation>
    <location>
        <position position="319"/>
    </location>
</feature>
<feature type="mutagenesis site" description="Loss of cell signaling activity." evidence="7">
    <original>C</original>
    <variation>A</variation>
    <location>
        <position position="333"/>
    </location>
</feature>
<feature type="mutagenesis site" description="Loss of cell signaling activity." evidence="7">
    <original>S</original>
    <variation>A</variation>
    <location>
        <position position="576"/>
    </location>
</feature>
<feature type="mutagenesis site" description="No loss of cell signaling activity." evidence="7">
    <original>S</original>
    <variation>D</variation>
    <location>
        <position position="576"/>
    </location>
</feature>
<feature type="mutagenesis site" description="Loss of cell signaling activity." evidence="7">
    <original>D</original>
    <variation>A</variation>
    <location>
        <position position="652"/>
    </location>
</feature>
<feature type="mutagenesis site" description="Loss of cell signaling activity and increases susceptibility to infection by G.zeae." evidence="7">
    <original>D</original>
    <variation>N</variation>
    <location>
        <position position="670"/>
    </location>
</feature>
<feature type="mutagenesis site" description="Loss of cell signaling activity." evidence="7">
    <original>T</original>
    <variation>A</variation>
    <location>
        <position position="686"/>
    </location>
</feature>
<feature type="mutagenesis site" description="No loss of cell signaling activity." evidence="7">
    <original>T</original>
    <variation>D</variation>
    <location>
        <position position="686"/>
    </location>
</feature>
<feature type="mutagenesis site" description="Loss of cell signaling activity." evidence="7">
    <original>T</original>
    <variation>A</variation>
    <location>
        <position position="691"/>
    </location>
</feature>
<feature type="mutagenesis site" description="No loss of cell signaling activity." evidence="7">
    <original>T</original>
    <variation>D</variation>
    <location>
        <position position="691"/>
    </location>
</feature>
<accession>A0A1D6E0S8</accession>
<dbReference type="EC" id="2.7.11.1" evidence="4"/>
<dbReference type="EMBL" id="CM007648">
    <property type="protein sequence ID" value="ONM14328.1"/>
    <property type="molecule type" value="Genomic_DNA"/>
</dbReference>
<dbReference type="RefSeq" id="XP_008668953.1">
    <molecule id="A0A1D6E0S8-1"/>
    <property type="nucleotide sequence ID" value="XM_008670731.1"/>
</dbReference>
<dbReference type="SMR" id="A0A1D6E0S8"/>
<dbReference type="IntAct" id="A0A1D6E0S8">
    <property type="interactions" value="1"/>
</dbReference>
<dbReference type="STRING" id="4577.A0A1D6E0S8"/>
<dbReference type="PaxDb" id="4577-GRMZM2G180160_P01"/>
<dbReference type="EnsemblPlants" id="Zm00001eb071980_T003">
    <molecule id="A0A1D6E0S8-1"/>
    <property type="protein sequence ID" value="Zm00001eb071980_P003"/>
    <property type="gene ID" value="Zm00001eb071980"/>
</dbReference>
<dbReference type="GeneID" id="103645992"/>
<dbReference type="Gramene" id="Zm00001eb071980_T003">
    <molecule id="A0A1D6E0S8-1"/>
    <property type="protein sequence ID" value="Zm00001eb071980_P003"/>
    <property type="gene ID" value="Zm00001eb071980"/>
</dbReference>
<dbReference type="KEGG" id="zma:103645992"/>
<dbReference type="eggNOG" id="ENOG502QQPF">
    <property type="taxonomic scope" value="Eukaryota"/>
</dbReference>
<dbReference type="OrthoDB" id="4062651at2759"/>
<dbReference type="Proteomes" id="UP000007305">
    <property type="component" value="Chromosome 2"/>
</dbReference>
<dbReference type="ExpressionAtlas" id="A0A1D6E0S8">
    <property type="expression patterns" value="baseline and differential"/>
</dbReference>
<dbReference type="GO" id="GO:0009897">
    <property type="term" value="C:external side of plasma membrane"/>
    <property type="evidence" value="ECO:0000314"/>
    <property type="project" value="UniProtKB"/>
</dbReference>
<dbReference type="GO" id="GO:0005886">
    <property type="term" value="C:plasma membrane"/>
    <property type="evidence" value="ECO:0000314"/>
    <property type="project" value="UniProtKB"/>
</dbReference>
<dbReference type="GO" id="GO:0005524">
    <property type="term" value="F:ATP binding"/>
    <property type="evidence" value="ECO:0007669"/>
    <property type="project" value="UniProtKB-KW"/>
</dbReference>
<dbReference type="GO" id="GO:0005509">
    <property type="term" value="F:calcium ion binding"/>
    <property type="evidence" value="ECO:0007669"/>
    <property type="project" value="InterPro"/>
</dbReference>
<dbReference type="GO" id="GO:0004674">
    <property type="term" value="F:protein serine/threonine kinase activity"/>
    <property type="evidence" value="ECO:0007669"/>
    <property type="project" value="UniProtKB-KW"/>
</dbReference>
<dbReference type="GO" id="GO:0007166">
    <property type="term" value="P:cell surface receptor signaling pathway"/>
    <property type="evidence" value="ECO:0000318"/>
    <property type="project" value="GO_Central"/>
</dbReference>
<dbReference type="GO" id="GO:0009603">
    <property type="term" value="P:detection of symbiotic fungus"/>
    <property type="evidence" value="ECO:0000315"/>
    <property type="project" value="UniProtKB"/>
</dbReference>
<dbReference type="GO" id="GO:0045087">
    <property type="term" value="P:innate immune response"/>
    <property type="evidence" value="ECO:0000315"/>
    <property type="project" value="UniProtKB"/>
</dbReference>
<dbReference type="GO" id="GO:0034052">
    <property type="term" value="P:positive regulation of plant-type hypersensitive response"/>
    <property type="evidence" value="ECO:0000315"/>
    <property type="project" value="UniProtKB"/>
</dbReference>
<dbReference type="CDD" id="cd00054">
    <property type="entry name" value="EGF_CA"/>
    <property type="match status" value="1"/>
</dbReference>
<dbReference type="CDD" id="cd14066">
    <property type="entry name" value="STKc_IRAK"/>
    <property type="match status" value="1"/>
</dbReference>
<dbReference type="FunFam" id="1.10.510.10:FF:000084">
    <property type="entry name" value="Wall-associated receptor kinase 2"/>
    <property type="match status" value="1"/>
</dbReference>
<dbReference type="FunFam" id="3.30.200.20:FF:000043">
    <property type="entry name" value="Wall-associated receptor kinase 2"/>
    <property type="match status" value="1"/>
</dbReference>
<dbReference type="Gene3D" id="2.10.25.10">
    <property type="entry name" value="Laminin"/>
    <property type="match status" value="1"/>
</dbReference>
<dbReference type="Gene3D" id="3.30.200.20">
    <property type="entry name" value="Phosphorylase Kinase, domain 1"/>
    <property type="match status" value="1"/>
</dbReference>
<dbReference type="Gene3D" id="1.10.510.10">
    <property type="entry name" value="Transferase(Phosphotransferase) domain 1"/>
    <property type="match status" value="1"/>
</dbReference>
<dbReference type="InterPro" id="IPR001881">
    <property type="entry name" value="EGF-like_Ca-bd_dom"/>
</dbReference>
<dbReference type="InterPro" id="IPR000742">
    <property type="entry name" value="EGF-like_dom"/>
</dbReference>
<dbReference type="InterPro" id="IPR000152">
    <property type="entry name" value="EGF-type_Asp/Asn_hydroxyl_site"/>
</dbReference>
<dbReference type="InterPro" id="IPR018097">
    <property type="entry name" value="EGF_Ca-bd_CS"/>
</dbReference>
<dbReference type="InterPro" id="IPR011009">
    <property type="entry name" value="Kinase-like_dom_sf"/>
</dbReference>
<dbReference type="InterPro" id="IPR000719">
    <property type="entry name" value="Prot_kinase_dom"/>
</dbReference>
<dbReference type="InterPro" id="IPR008271">
    <property type="entry name" value="Ser/Thr_kinase_AS"/>
</dbReference>
<dbReference type="InterPro" id="IPR045274">
    <property type="entry name" value="WAK-like"/>
</dbReference>
<dbReference type="PANTHER" id="PTHR27005:SF168">
    <property type="entry name" value="WALL-ASSOCIATED RECEPTOR KINASE 17"/>
    <property type="match status" value="1"/>
</dbReference>
<dbReference type="PANTHER" id="PTHR27005">
    <property type="entry name" value="WALL-ASSOCIATED RECEPTOR KINASE-LIKE 21"/>
    <property type="match status" value="1"/>
</dbReference>
<dbReference type="Pfam" id="PF00069">
    <property type="entry name" value="Pkinase"/>
    <property type="match status" value="1"/>
</dbReference>
<dbReference type="SMART" id="SM00181">
    <property type="entry name" value="EGF"/>
    <property type="match status" value="3"/>
</dbReference>
<dbReference type="SMART" id="SM00179">
    <property type="entry name" value="EGF_CA"/>
    <property type="match status" value="2"/>
</dbReference>
<dbReference type="SMART" id="SM00220">
    <property type="entry name" value="S_TKc"/>
    <property type="match status" value="1"/>
</dbReference>
<dbReference type="SUPFAM" id="SSF57196">
    <property type="entry name" value="EGF/Laminin"/>
    <property type="match status" value="1"/>
</dbReference>
<dbReference type="SUPFAM" id="SSF56112">
    <property type="entry name" value="Protein kinase-like (PK-like)"/>
    <property type="match status" value="1"/>
</dbReference>
<dbReference type="PROSITE" id="PS00010">
    <property type="entry name" value="ASX_HYDROXYL"/>
    <property type="match status" value="1"/>
</dbReference>
<dbReference type="PROSITE" id="PS50026">
    <property type="entry name" value="EGF_3"/>
    <property type="match status" value="2"/>
</dbReference>
<dbReference type="PROSITE" id="PS01187">
    <property type="entry name" value="EGF_CA"/>
    <property type="match status" value="1"/>
</dbReference>
<dbReference type="PROSITE" id="PS50011">
    <property type="entry name" value="PROTEIN_KINASE_DOM"/>
    <property type="match status" value="1"/>
</dbReference>
<dbReference type="PROSITE" id="PS00108">
    <property type="entry name" value="PROTEIN_KINASE_ST"/>
    <property type="match status" value="1"/>
</dbReference>
<reference evidence="12" key="1">
    <citation type="submission" date="2015-12" db="EMBL/GenBank/DDBJ databases">
        <title>Update maize B73 reference genome by single molecule sequencing technologies.</title>
        <authorList>
            <consortium name="Maize Genome Sequencing Project"/>
            <person name="Ware D."/>
        </authorList>
    </citation>
    <scope>NUCLEOTIDE SEQUENCE [LARGE SCALE GENOMIC DNA]</scope>
    <source>
        <strain evidence="12">cv. B73</strain>
        <tissue evidence="11">Seedling</tissue>
    </source>
</reference>
<reference evidence="9" key="2">
    <citation type="journal article" date="2022" name="Cell Rep.">
        <title>Fungal CFEM effectors negatively regulate a maize wall-associated kinase by interacting with its alternatively spliced variant to dampen resistance.</title>
        <authorList>
            <person name="Zuo N."/>
            <person name="Bai W.Z."/>
            <person name="Wei W.Q."/>
            <person name="Yuan T.L."/>
            <person name="Zhang D."/>
            <person name="Wang Y.Z."/>
            <person name="Tang W.H."/>
        </authorList>
    </citation>
    <scope>NUCLEOTIDE SEQUENCE [MRNA] (ISOFORM 2)</scope>
    <scope>INTERACTION (ISOFORM 1) WITH LRR5</scope>
    <scope>INTERACTION (MICROBIAL INFECTION) WITH G.ZEAE CFEM1; G.ZEAE CFEMN1 AND G.ZEAE CFEM5</scope>
    <scope>SUBCELLULAR LOCATION (ISOFORMS 1 AND 2)</scope>
    <scope>MUTAGENESIS OF CYS-317; CYS-319; CYS-333; SER-576; ASP-652; ASP-670; THR-686 AND THR-691</scope>
</reference>
<sequence>MPSRSPACRPRGRNRRSAADAVARPLALALILVSTLPRAAHSQDLALPPVQPRGVRRTMTCDNIPEPFGTRSRGASRLPGFEVTCGPNREAMLSIGGDAYMIDFVSVSGSYVVVFAEPITQVCYDGKGKPTPDTGTGAKSSEGTTTTFTWSLEGTPFTFSKSNKLVNFGCNRTLMANFFIVPGDSSPLYTSCTTTCNTLQISGSCLGEACCEAPMDQVNGAKAFSLSFERTTANGTGEEDGTCSAAFFLDKDETVFTFSGDEVRPLKTALLPPGERRMVLDWAIGSTSCEQTQSYTFEKLCKYGTCVDAPTGAGYLCKCPSGYDGNPYVSDGCQDINECRNYNSNNCTYQNLCNNTLGGYTCSCPENNIGDGYRTGTGCNTTLATPVSPSQQPQGINVCDHPEKNPCTYIKYCIDLEGVVSCACPEGMSGDGRKNGRGCCFSCQKHFPLDTVLGVSLVLMVTTTTAASCYCWAVKKRELGRKRAELFRKNGGLLLQQRFSTITSQGEDQYSSKIFSAEELKAATDNYSESRILGRGGQGTVYKGILPDQTVVAIKKSKVFDESQVEQFVNEIAILSQIDHPNVVKLLGCCLETQVPLLVYEFISNGTLFQHIHNRNATRPLTWEDCLRIAAETADALAYLHSASSIPIIHRDIKSSNILLDGNFVAKIADFGASRSVPFDQTHITTLIQGTIGYLDPEYFQSSQLTEKSDVYSFGVVLAELLTRQKPISAARPEDSCNLAMHLVVLFNKGRLLQEIEPHILAEAGEDQCYAVAELSVRCLNVKGEERPAMVVVASVLQELRRSFTIDQAVGIKDESIQENSEQEEKHLHESRSIPSLQSSEVSTQCSMEAKMSSFC</sequence>
<evidence type="ECO:0000250" key="1">
    <source>
        <dbReference type="UniProtKB" id="Q1MX30"/>
    </source>
</evidence>
<evidence type="ECO:0000255" key="2"/>
<evidence type="ECO:0000255" key="3">
    <source>
        <dbReference type="PROSITE-ProRule" id="PRU00076"/>
    </source>
</evidence>
<evidence type="ECO:0000255" key="4">
    <source>
        <dbReference type="PROSITE-ProRule" id="PRU00159"/>
    </source>
</evidence>
<evidence type="ECO:0000255" key="5">
    <source>
        <dbReference type="PROSITE-ProRule" id="PRU00498"/>
    </source>
</evidence>
<evidence type="ECO:0000256" key="6">
    <source>
        <dbReference type="SAM" id="MobiDB-lite"/>
    </source>
</evidence>
<evidence type="ECO:0000269" key="7">
    <source>
    </source>
</evidence>
<evidence type="ECO:0000303" key="8">
    <source>
    </source>
</evidence>
<evidence type="ECO:0000305" key="9"/>
<evidence type="ECO:0000305" key="10">
    <source>
    </source>
</evidence>
<evidence type="ECO:0000312" key="11">
    <source>
        <dbReference type="EMBL" id="ONM14328.1"/>
    </source>
</evidence>
<evidence type="ECO:0000312" key="12">
    <source>
        <dbReference type="Proteomes" id="UP000007305"/>
    </source>
</evidence>